<keyword id="KW-0997">Cell inner membrane</keyword>
<keyword id="KW-1003">Cell membrane</keyword>
<keyword id="KW-0418">Kinase</keyword>
<keyword id="KW-0472">Membrane</keyword>
<keyword id="KW-0598">Phosphotransferase system</keyword>
<keyword id="KW-1185">Reference proteome</keyword>
<keyword id="KW-0762">Sugar transport</keyword>
<keyword id="KW-0808">Transferase</keyword>
<keyword id="KW-0812">Transmembrane</keyword>
<keyword id="KW-1133">Transmembrane helix</keyword>
<keyword id="KW-0813">Transport</keyword>
<name>PTXB_ECOLI</name>
<sequence>MFSNHADMMLTQIAIGLCFTLLYFVVFRTLILQFNMCTPGREDAEVKLYSKAEYKASRGQTTAAEPKKELDQAAGILQALGGVGNISSINNCATRLRIALHDMSQTLDDEVFKKLGAHGVFRSGDAIQVIIGLHVSQLREQLDSLINSHQSAENVAITEAV</sequence>
<feature type="chain" id="PRO_0000186580" description="Phosphotransferase enzyme IIB component GlvB">
    <location>
        <begin position="1"/>
        <end position="161"/>
    </location>
</feature>
<feature type="transmembrane region" description="Helical" evidence="2">
    <location>
        <begin position="10"/>
        <end position="32"/>
    </location>
</feature>
<feature type="domain" description="PTS EIIB type-1" evidence="3">
    <location>
        <begin position="70"/>
        <end position="152"/>
    </location>
</feature>
<feature type="active site" description="Phosphocysteine intermediate" evidence="1">
    <location>
        <position position="92"/>
    </location>
</feature>
<evidence type="ECO:0000250" key="1"/>
<evidence type="ECO:0000255" key="2"/>
<evidence type="ECO:0000255" key="3">
    <source>
        <dbReference type="PROSITE-ProRule" id="PRU00421"/>
    </source>
</evidence>
<evidence type="ECO:0000303" key="4">
    <source>
    </source>
</evidence>
<evidence type="ECO:0000305" key="5"/>
<evidence type="ECO:0000305" key="6">
    <source>
    </source>
</evidence>
<organism>
    <name type="scientific">Escherichia coli (strain K12)</name>
    <dbReference type="NCBI Taxonomy" id="83333"/>
    <lineage>
        <taxon>Bacteria</taxon>
        <taxon>Pseudomonadati</taxon>
        <taxon>Pseudomonadota</taxon>
        <taxon>Gammaproteobacteria</taxon>
        <taxon>Enterobacterales</taxon>
        <taxon>Enterobacteriaceae</taxon>
        <taxon>Escherichia</taxon>
    </lineage>
</organism>
<accession>P69789</accession>
<accession>A0A385XNH2</accession>
<accession>P31451</accession>
<accession>Q2M7Z4</accession>
<gene>
    <name evidence="4" type="primary">glvB</name>
    <name type="synonym">glvC</name>
    <name type="synonym">yidN</name>
    <name type="ordered locus">b3682</name>
    <name type="ordered locus">JW3659</name>
</gene>
<proteinExistence type="inferred from homology"/>
<comment type="function">
    <text evidence="1 6">The phosphoenolpyruvate-dependent sugar phosphotransferase system (sugar PTS), a major carbohydrate active -transport system, catalyzes the phosphorylation of incoming sugar substrates concomitantly with their translocation across the cell membrane. This operon may be cryptic in wild-type K12 strains (Probable).</text>
</comment>
<comment type="subcellular location">
    <subcellularLocation>
        <location evidence="5">Cell inner membrane</location>
        <topology evidence="5">Single-pass membrane protein</topology>
    </subcellularLocation>
</comment>
<comment type="domain">
    <text>The EIIB domain is phosphorylated by phospho-EIIA on a cysteinyl or histidyl residue, depending on the transported sugar. Then, it transfers the phosphoryl group to the sugar substrate concomitantly with the sugar uptake processed by the EIIC domain.</text>
</comment>
<reference key="1">
    <citation type="journal article" date="1993" name="Genomics">
        <title>DNA sequence and analysis of 136 kilobases of the Escherichia coli genome: organizational symmetry around the origin of replication.</title>
        <authorList>
            <person name="Burland V.D."/>
            <person name="Plunkett G. III"/>
            <person name="Daniels D.L."/>
            <person name="Blattner F.R."/>
        </authorList>
    </citation>
    <scope>NUCLEOTIDE SEQUENCE [LARGE SCALE GENOMIC DNA]</scope>
    <source>
        <strain>K12 / MG1655 / ATCC 47076</strain>
    </source>
</reference>
<reference key="2">
    <citation type="journal article" date="1997" name="Science">
        <title>The complete genome sequence of Escherichia coli K-12.</title>
        <authorList>
            <person name="Blattner F.R."/>
            <person name="Plunkett G. III"/>
            <person name="Bloch C.A."/>
            <person name="Perna N.T."/>
            <person name="Burland V."/>
            <person name="Riley M."/>
            <person name="Collado-Vides J."/>
            <person name="Glasner J.D."/>
            <person name="Rode C.K."/>
            <person name="Mayhew G.F."/>
            <person name="Gregor J."/>
            <person name="Davis N.W."/>
            <person name="Kirkpatrick H.A."/>
            <person name="Goeden M.A."/>
            <person name="Rose D.J."/>
            <person name="Mau B."/>
            <person name="Shao Y."/>
        </authorList>
    </citation>
    <scope>NUCLEOTIDE SEQUENCE [LARGE SCALE GENOMIC DNA]</scope>
    <source>
        <strain>K12 / MG1655 / ATCC 47076</strain>
    </source>
</reference>
<reference key="3">
    <citation type="journal article" date="2006" name="Mol. Syst. Biol.">
        <title>Highly accurate genome sequences of Escherichia coli K-12 strains MG1655 and W3110.</title>
        <authorList>
            <person name="Hayashi K."/>
            <person name="Morooka N."/>
            <person name="Yamamoto Y."/>
            <person name="Fujita K."/>
            <person name="Isono K."/>
            <person name="Choi S."/>
            <person name="Ohtsubo E."/>
            <person name="Baba T."/>
            <person name="Wanner B.L."/>
            <person name="Mori H."/>
            <person name="Horiuchi T."/>
        </authorList>
    </citation>
    <scope>NUCLEOTIDE SEQUENCE [LARGE SCALE GENOMIC DNA]</scope>
    <source>
        <strain>K12 / W3110 / ATCC 27325 / DSM 5911</strain>
    </source>
</reference>
<reference key="4">
    <citation type="journal article" date="1994" name="Protein Sci.">
        <title>Novel phosphotransferase system genes revealed by bacterial genome analysis: unique, putative fructose- and glucoside-specific systems.</title>
        <authorList>
            <person name="Reizer J."/>
            <person name="Michotey V."/>
            <person name="Reizer A."/>
            <person name="Saier M.H. Jr."/>
        </authorList>
    </citation>
    <scope>DISCUSSION OF SEQUENCE</scope>
</reference>
<dbReference type="EC" id="2.7.1.-"/>
<dbReference type="EMBL" id="L10328">
    <property type="protein sequence ID" value="AAA62034.1"/>
    <property type="molecule type" value="Genomic_DNA"/>
</dbReference>
<dbReference type="EMBL" id="U00096">
    <property type="protein sequence ID" value="AYC08252.1"/>
    <property type="molecule type" value="Genomic_DNA"/>
</dbReference>
<dbReference type="EMBL" id="AP009048">
    <property type="protein sequence ID" value="BAE77612.1"/>
    <property type="molecule type" value="Genomic_DNA"/>
</dbReference>
<dbReference type="PIR" id="C65170">
    <property type="entry name" value="C65170"/>
</dbReference>
<dbReference type="SMR" id="P69789"/>
<dbReference type="FunCoup" id="P69789">
    <property type="interactions" value="137"/>
</dbReference>
<dbReference type="IntAct" id="P69789">
    <property type="interactions" value="2"/>
</dbReference>
<dbReference type="EnsemblBacteria" id="AYC08252">
    <property type="protein sequence ID" value="AYC08252"/>
    <property type="gene ID" value="b3682"/>
</dbReference>
<dbReference type="KEGG" id="ecj:JW3659"/>
<dbReference type="KEGG" id="ecoc:C3026_19965"/>
<dbReference type="PATRIC" id="fig|83333.103.peg.4617"/>
<dbReference type="EchoBASE" id="EB1660"/>
<dbReference type="eggNOG" id="COG1263">
    <property type="taxonomic scope" value="Bacteria"/>
</dbReference>
<dbReference type="eggNOG" id="COG1264">
    <property type="taxonomic scope" value="Bacteria"/>
</dbReference>
<dbReference type="HOGENOM" id="CLU_012312_8_1_6"/>
<dbReference type="InParanoid" id="P69789"/>
<dbReference type="PhylomeDB" id="P69789"/>
<dbReference type="BioCyc" id="EcoCyc:GLVB-MONOMER"/>
<dbReference type="PRO" id="PR:P69789"/>
<dbReference type="Proteomes" id="UP000000625">
    <property type="component" value="Chromosome"/>
</dbReference>
<dbReference type="GO" id="GO:0005886">
    <property type="term" value="C:plasma membrane"/>
    <property type="evidence" value="ECO:0007669"/>
    <property type="project" value="UniProtKB-SubCell"/>
</dbReference>
<dbReference type="GO" id="GO:0016301">
    <property type="term" value="F:kinase activity"/>
    <property type="evidence" value="ECO:0007669"/>
    <property type="project" value="UniProtKB-KW"/>
</dbReference>
<dbReference type="GO" id="GO:0008982">
    <property type="term" value="F:protein-N(PI)-phosphohistidine-sugar phosphotransferase activity"/>
    <property type="evidence" value="ECO:0007669"/>
    <property type="project" value="InterPro"/>
</dbReference>
<dbReference type="GO" id="GO:0009401">
    <property type="term" value="P:phosphoenolpyruvate-dependent sugar phosphotransferase system"/>
    <property type="evidence" value="ECO:0007669"/>
    <property type="project" value="UniProtKB-KW"/>
</dbReference>
<dbReference type="CDD" id="cd00212">
    <property type="entry name" value="PTS_IIB_glc"/>
    <property type="match status" value="1"/>
</dbReference>
<dbReference type="Gene3D" id="3.30.1360.60">
    <property type="entry name" value="Glucose permease domain IIB"/>
    <property type="match status" value="1"/>
</dbReference>
<dbReference type="InterPro" id="IPR036878">
    <property type="entry name" value="Glu_permease_IIB"/>
</dbReference>
<dbReference type="InterPro" id="IPR018113">
    <property type="entry name" value="PTrfase_EIIB_Cys"/>
</dbReference>
<dbReference type="InterPro" id="IPR050429">
    <property type="entry name" value="PTS_Glucose_EIICBA"/>
</dbReference>
<dbReference type="InterPro" id="IPR001996">
    <property type="entry name" value="PTS_IIB_1"/>
</dbReference>
<dbReference type="NCBIfam" id="TIGR00826">
    <property type="entry name" value="EIIB_glc"/>
    <property type="match status" value="1"/>
</dbReference>
<dbReference type="NCBIfam" id="NF007255">
    <property type="entry name" value="PRK09702.1"/>
    <property type="match status" value="1"/>
</dbReference>
<dbReference type="PANTHER" id="PTHR30009">
    <property type="entry name" value="CYTOCHROME C-TYPE SYNTHESIS PROTEIN AND PTS TRANSMEMBRANE COMPONENT"/>
    <property type="match status" value="1"/>
</dbReference>
<dbReference type="PANTHER" id="PTHR30009:SF12">
    <property type="entry name" value="PHOSPHOTRANSFERASE IIC COMPONENT GLVC"/>
    <property type="match status" value="1"/>
</dbReference>
<dbReference type="Pfam" id="PF00367">
    <property type="entry name" value="PTS_EIIB"/>
    <property type="match status" value="1"/>
</dbReference>
<dbReference type="SUPFAM" id="SSF55604">
    <property type="entry name" value="Glucose permease domain IIB"/>
    <property type="match status" value="1"/>
</dbReference>
<dbReference type="PROSITE" id="PS51098">
    <property type="entry name" value="PTS_EIIB_TYPE_1"/>
    <property type="match status" value="1"/>
</dbReference>
<dbReference type="PROSITE" id="PS01035">
    <property type="entry name" value="PTS_EIIB_TYPE_1_CYS"/>
    <property type="match status" value="1"/>
</dbReference>
<protein>
    <recommendedName>
        <fullName>Phosphotransferase enzyme IIB component GlvB</fullName>
        <ecNumber>2.7.1.-</ecNumber>
    </recommendedName>
    <alternativeName>
        <fullName>PTS system EIIB component</fullName>
    </alternativeName>
</protein>